<evidence type="ECO:0000255" key="1">
    <source>
        <dbReference type="HAMAP-Rule" id="MF_00003"/>
    </source>
</evidence>
<organism>
    <name type="scientific">Acinetobacter baylyi (strain ATCC 33305 / BD413 / ADP1)</name>
    <dbReference type="NCBI Taxonomy" id="62977"/>
    <lineage>
        <taxon>Bacteria</taxon>
        <taxon>Pseudomonadati</taxon>
        <taxon>Pseudomonadota</taxon>
        <taxon>Gammaproteobacteria</taxon>
        <taxon>Moraxellales</taxon>
        <taxon>Moraxellaceae</taxon>
        <taxon>Acinetobacter</taxon>
    </lineage>
</organism>
<name>RBFA_ACIAD</name>
<gene>
    <name evidence="1" type="primary">rbfA</name>
    <name type="ordered locus">ACIAD0370</name>
</gene>
<keyword id="KW-0963">Cytoplasm</keyword>
<keyword id="KW-0690">Ribosome biogenesis</keyword>
<proteinExistence type="inferred from homology"/>
<sequence length="133" mass="15051">MAGSQRLKRMADSVQRELSELIRQELKDPRLGGLVTISAVKVSADMGYAEVYVTVMGRELGDEQSEAANKETLDVLNKASGFLRHELSRRIKTRITPRLRFHYDKTNAYGNYMFGLIEKAVQDLPEQSSEDKS</sequence>
<protein>
    <recommendedName>
        <fullName evidence="1">Ribosome-binding factor A</fullName>
    </recommendedName>
</protein>
<feature type="chain" id="PRO_0000102608" description="Ribosome-binding factor A">
    <location>
        <begin position="1"/>
        <end position="133"/>
    </location>
</feature>
<dbReference type="EMBL" id="CR543861">
    <property type="protein sequence ID" value="CAG67318.1"/>
    <property type="molecule type" value="Genomic_DNA"/>
</dbReference>
<dbReference type="RefSeq" id="WP_004920457.1">
    <property type="nucleotide sequence ID" value="NC_005966.1"/>
</dbReference>
<dbReference type="SMR" id="Q6FF39"/>
<dbReference type="STRING" id="202950.GCA_001485005_00633"/>
<dbReference type="GeneID" id="45232874"/>
<dbReference type="KEGG" id="aci:ACIAD0370"/>
<dbReference type="eggNOG" id="COG0858">
    <property type="taxonomic scope" value="Bacteria"/>
</dbReference>
<dbReference type="HOGENOM" id="CLU_089475_5_0_6"/>
<dbReference type="OrthoDB" id="307788at2"/>
<dbReference type="BioCyc" id="ASP62977:ACIAD_RS01730-MONOMER"/>
<dbReference type="Proteomes" id="UP000000430">
    <property type="component" value="Chromosome"/>
</dbReference>
<dbReference type="GO" id="GO:0005829">
    <property type="term" value="C:cytosol"/>
    <property type="evidence" value="ECO:0007669"/>
    <property type="project" value="TreeGrafter"/>
</dbReference>
<dbReference type="GO" id="GO:0043024">
    <property type="term" value="F:ribosomal small subunit binding"/>
    <property type="evidence" value="ECO:0007669"/>
    <property type="project" value="TreeGrafter"/>
</dbReference>
<dbReference type="GO" id="GO:0030490">
    <property type="term" value="P:maturation of SSU-rRNA"/>
    <property type="evidence" value="ECO:0007669"/>
    <property type="project" value="UniProtKB-UniRule"/>
</dbReference>
<dbReference type="Gene3D" id="3.30.300.20">
    <property type="match status" value="1"/>
</dbReference>
<dbReference type="HAMAP" id="MF_00003">
    <property type="entry name" value="RbfA"/>
    <property type="match status" value="1"/>
</dbReference>
<dbReference type="InterPro" id="IPR015946">
    <property type="entry name" value="KH_dom-like_a/b"/>
</dbReference>
<dbReference type="InterPro" id="IPR000238">
    <property type="entry name" value="RbfA"/>
</dbReference>
<dbReference type="InterPro" id="IPR023799">
    <property type="entry name" value="RbfA_dom_sf"/>
</dbReference>
<dbReference type="NCBIfam" id="NF010389">
    <property type="entry name" value="PRK13816.1"/>
    <property type="match status" value="1"/>
</dbReference>
<dbReference type="NCBIfam" id="TIGR00082">
    <property type="entry name" value="rbfA"/>
    <property type="match status" value="1"/>
</dbReference>
<dbReference type="PANTHER" id="PTHR33515">
    <property type="entry name" value="RIBOSOME-BINDING FACTOR A, CHLOROPLASTIC-RELATED"/>
    <property type="match status" value="1"/>
</dbReference>
<dbReference type="PANTHER" id="PTHR33515:SF1">
    <property type="entry name" value="RIBOSOME-BINDING FACTOR A, CHLOROPLASTIC-RELATED"/>
    <property type="match status" value="1"/>
</dbReference>
<dbReference type="Pfam" id="PF02033">
    <property type="entry name" value="RBFA"/>
    <property type="match status" value="1"/>
</dbReference>
<dbReference type="SUPFAM" id="SSF89919">
    <property type="entry name" value="Ribosome-binding factor A, RbfA"/>
    <property type="match status" value="1"/>
</dbReference>
<reference key="1">
    <citation type="journal article" date="2004" name="Nucleic Acids Res.">
        <title>Unique features revealed by the genome sequence of Acinetobacter sp. ADP1, a versatile and naturally transformation competent bacterium.</title>
        <authorList>
            <person name="Barbe V."/>
            <person name="Vallenet D."/>
            <person name="Fonknechten N."/>
            <person name="Kreimeyer A."/>
            <person name="Oztas S."/>
            <person name="Labarre L."/>
            <person name="Cruveiller S."/>
            <person name="Robert C."/>
            <person name="Duprat S."/>
            <person name="Wincker P."/>
            <person name="Ornston L.N."/>
            <person name="Weissenbach J."/>
            <person name="Marliere P."/>
            <person name="Cohen G.N."/>
            <person name="Medigue C."/>
        </authorList>
    </citation>
    <scope>NUCLEOTIDE SEQUENCE [LARGE SCALE GENOMIC DNA]</scope>
    <source>
        <strain>ATCC 33305 / BD413 / ADP1</strain>
    </source>
</reference>
<accession>Q6FF39</accession>
<comment type="function">
    <text evidence="1">One of several proteins that assist in the late maturation steps of the functional core of the 30S ribosomal subunit. Associates with free 30S ribosomal subunits (but not with 30S subunits that are part of 70S ribosomes or polysomes). Required for efficient processing of 16S rRNA. May interact with the 5'-terminal helix region of 16S rRNA.</text>
</comment>
<comment type="subunit">
    <text evidence="1">Monomer. Binds 30S ribosomal subunits, but not 50S ribosomal subunits or 70S ribosomes.</text>
</comment>
<comment type="subcellular location">
    <subcellularLocation>
        <location evidence="1">Cytoplasm</location>
    </subcellularLocation>
</comment>
<comment type="similarity">
    <text evidence="1">Belongs to the RbfA family.</text>
</comment>